<proteinExistence type="inferred from homology"/>
<protein>
    <recommendedName>
        <fullName evidence="1">Cell division protein FtsB</fullName>
    </recommendedName>
</protein>
<keyword id="KW-0131">Cell cycle</keyword>
<keyword id="KW-0132">Cell division</keyword>
<keyword id="KW-0997">Cell inner membrane</keyword>
<keyword id="KW-1003">Cell membrane</keyword>
<keyword id="KW-0175">Coiled coil</keyword>
<keyword id="KW-0472">Membrane</keyword>
<keyword id="KW-0812">Transmembrane</keyword>
<keyword id="KW-1133">Transmembrane helix</keyword>
<dbReference type="EMBL" id="CP001091">
    <property type="protein sequence ID" value="ACE61512.1"/>
    <property type="molecule type" value="Genomic_DNA"/>
</dbReference>
<dbReference type="RefSeq" id="WP_005597256.1">
    <property type="nucleotide sequence ID" value="NC_010939.1"/>
</dbReference>
<dbReference type="SMR" id="B3H1E0"/>
<dbReference type="GeneID" id="48598985"/>
<dbReference type="KEGG" id="apa:APP7_0860"/>
<dbReference type="HOGENOM" id="CLU_134863_5_2_6"/>
<dbReference type="Proteomes" id="UP000001226">
    <property type="component" value="Chromosome"/>
</dbReference>
<dbReference type="GO" id="GO:0032153">
    <property type="term" value="C:cell division site"/>
    <property type="evidence" value="ECO:0007669"/>
    <property type="project" value="UniProtKB-UniRule"/>
</dbReference>
<dbReference type="GO" id="GO:0030428">
    <property type="term" value="C:cell septum"/>
    <property type="evidence" value="ECO:0007669"/>
    <property type="project" value="TreeGrafter"/>
</dbReference>
<dbReference type="GO" id="GO:0005886">
    <property type="term" value="C:plasma membrane"/>
    <property type="evidence" value="ECO:0007669"/>
    <property type="project" value="UniProtKB-SubCell"/>
</dbReference>
<dbReference type="GO" id="GO:0043093">
    <property type="term" value="P:FtsZ-dependent cytokinesis"/>
    <property type="evidence" value="ECO:0007669"/>
    <property type="project" value="UniProtKB-UniRule"/>
</dbReference>
<dbReference type="HAMAP" id="MF_00599">
    <property type="entry name" value="FtsB"/>
    <property type="match status" value="1"/>
</dbReference>
<dbReference type="InterPro" id="IPR023081">
    <property type="entry name" value="Cell_div_FtsB"/>
</dbReference>
<dbReference type="InterPro" id="IPR007060">
    <property type="entry name" value="FtsL/DivIC"/>
</dbReference>
<dbReference type="NCBIfam" id="NF002058">
    <property type="entry name" value="PRK00888.1"/>
    <property type="match status" value="1"/>
</dbReference>
<dbReference type="PANTHER" id="PTHR37485">
    <property type="entry name" value="CELL DIVISION PROTEIN FTSB"/>
    <property type="match status" value="1"/>
</dbReference>
<dbReference type="PANTHER" id="PTHR37485:SF1">
    <property type="entry name" value="CELL DIVISION PROTEIN FTSB"/>
    <property type="match status" value="1"/>
</dbReference>
<dbReference type="Pfam" id="PF04977">
    <property type="entry name" value="DivIC"/>
    <property type="match status" value="1"/>
</dbReference>
<comment type="function">
    <text evidence="1">Essential cell division protein. May link together the upstream cell division proteins, which are predominantly cytoplasmic, with the downstream cell division proteins, which are predominantly periplasmic.</text>
</comment>
<comment type="subunit">
    <text evidence="1">Part of a complex composed of FtsB, FtsL and FtsQ.</text>
</comment>
<comment type="subcellular location">
    <subcellularLocation>
        <location evidence="1">Cell inner membrane</location>
        <topology evidence="1">Single-pass type II membrane protein</topology>
    </subcellularLocation>
    <text evidence="1">Localizes to the division septum.</text>
</comment>
<comment type="similarity">
    <text evidence="1">Belongs to the FtsB family.</text>
</comment>
<organism>
    <name type="scientific">Actinobacillus pleuropneumoniae serotype 7 (strain AP76)</name>
    <dbReference type="NCBI Taxonomy" id="537457"/>
    <lineage>
        <taxon>Bacteria</taxon>
        <taxon>Pseudomonadati</taxon>
        <taxon>Pseudomonadota</taxon>
        <taxon>Gammaproteobacteria</taxon>
        <taxon>Pasteurellales</taxon>
        <taxon>Pasteurellaceae</taxon>
        <taxon>Actinobacillus</taxon>
    </lineage>
</organism>
<reference key="1">
    <citation type="submission" date="2008-06" db="EMBL/GenBank/DDBJ databases">
        <title>Genome and proteome analysis of A. pleuropneumoniae serotype 7.</title>
        <authorList>
            <person name="Linke B."/>
            <person name="Buettner F."/>
            <person name="Martinez-Arias R."/>
            <person name="Goesmann A."/>
            <person name="Baltes N."/>
            <person name="Tegetmeyer H."/>
            <person name="Singh M."/>
            <person name="Gerlach G.F."/>
        </authorList>
    </citation>
    <scope>NUCLEOTIDE SEQUENCE [LARGE SCALE GENOMIC DNA]</scope>
    <source>
        <strain>AP76</strain>
    </source>
</reference>
<sequence>MRVLIVFFAFLLAFFQYSFWFGKNGWSDYQEAQTAVERLKDENTKLEARNNLIAAEINDLKTGVNALEERARFEREMVKSDETFYRIVPRNQ</sequence>
<accession>B3H1E0</accession>
<feature type="chain" id="PRO_1000129918" description="Cell division protein FtsB">
    <location>
        <begin position="1"/>
        <end position="92"/>
    </location>
</feature>
<feature type="topological domain" description="Cytoplasmic" evidence="1">
    <location>
        <begin position="1"/>
        <end position="3"/>
    </location>
</feature>
<feature type="transmembrane region" description="Helical" evidence="1">
    <location>
        <begin position="4"/>
        <end position="21"/>
    </location>
</feature>
<feature type="topological domain" description="Periplasmic" evidence="1">
    <location>
        <begin position="22"/>
        <end position="92"/>
    </location>
</feature>
<feature type="coiled-coil region" evidence="1">
    <location>
        <begin position="27"/>
        <end position="76"/>
    </location>
</feature>
<name>FTSB_ACTP7</name>
<evidence type="ECO:0000255" key="1">
    <source>
        <dbReference type="HAMAP-Rule" id="MF_00599"/>
    </source>
</evidence>
<gene>
    <name evidence="1" type="primary">ftsB</name>
    <name type="ordered locus">APP7_0860</name>
</gene>